<evidence type="ECO:0000255" key="1">
    <source>
        <dbReference type="HAMAP-Rule" id="MF_00106"/>
    </source>
</evidence>
<keyword id="KW-0408">Iron</keyword>
<keyword id="KW-0456">Lyase</keyword>
<keyword id="KW-0464">Manganese</keyword>
<keyword id="KW-1185">Reference proteome</keyword>
<organism>
    <name type="scientific">Escherichia coli O1:K1 / APEC</name>
    <dbReference type="NCBI Taxonomy" id="405955"/>
    <lineage>
        <taxon>Bacteria</taxon>
        <taxon>Pseudomonadati</taxon>
        <taxon>Pseudomonadota</taxon>
        <taxon>Gammaproteobacteria</taxon>
        <taxon>Enterobacterales</taxon>
        <taxon>Enterobacteriaceae</taxon>
        <taxon>Escherichia</taxon>
    </lineage>
</organism>
<comment type="function">
    <text evidence="1">Catalyzes the dehydration of D-mannonate.</text>
</comment>
<comment type="catalytic activity">
    <reaction evidence="1">
        <text>D-mannonate = 2-dehydro-3-deoxy-D-gluconate + H2O</text>
        <dbReference type="Rhea" id="RHEA:20097"/>
        <dbReference type="ChEBI" id="CHEBI:15377"/>
        <dbReference type="ChEBI" id="CHEBI:17767"/>
        <dbReference type="ChEBI" id="CHEBI:57990"/>
        <dbReference type="EC" id="4.2.1.8"/>
    </reaction>
</comment>
<comment type="cofactor">
    <cofactor evidence="1">
        <name>Fe(2+)</name>
        <dbReference type="ChEBI" id="CHEBI:29033"/>
    </cofactor>
    <cofactor evidence="1">
        <name>Mn(2+)</name>
        <dbReference type="ChEBI" id="CHEBI:29035"/>
    </cofactor>
</comment>
<comment type="pathway">
    <text evidence="1">Carbohydrate metabolism; pentose and glucuronate interconversion.</text>
</comment>
<comment type="similarity">
    <text evidence="1">Belongs to the mannonate dehydratase family.</text>
</comment>
<accession>A1AJI8</accession>
<gene>
    <name evidence="1" type="primary">uxuA</name>
    <name type="ordered locus">Ecok1_43340</name>
    <name type="ORF">APECO1_2109</name>
</gene>
<name>UXUA_ECOK1</name>
<sequence>MEQTWRWYGPNDPVSLADVRQAGATGVVTALHHIPNGEVWSVEEILKRKAIVEDAGLVWSVVESVPIHEDIKTHTGNYEQWIANYQQTLRNLAQCGIRTVCYNFMPVLDWTRTDLEYVLPDGSKALRFDQIEFAAFEMHILKRPGAEADYTEEEIAQAAERFATMSDEDKARLTRNIIAGLPGAEEGYTLDQFRKHLELYKDIDKAKLRENFAVFLKAIIPVAEEVGVRMAVHPDDPPRPILGLPRIVSTIEDMQWMVDTVNSMANGFTMCTGSYGVRADNDLVDMIKQFGPRIYFTHLRSTMREDNPKTFHEAAHLNGDVDMYEVVKAIVEEEHRRKAEGKEDLIPMRPDHGHQMLDDLKKKTNPGYSAIGRLKGLAEVRGVELAIQRAFFSR</sequence>
<reference key="1">
    <citation type="journal article" date="2007" name="J. Bacteriol.">
        <title>The genome sequence of avian pathogenic Escherichia coli strain O1:K1:H7 shares strong similarities with human extraintestinal pathogenic E. coli genomes.</title>
        <authorList>
            <person name="Johnson T.J."/>
            <person name="Kariyawasam S."/>
            <person name="Wannemuehler Y."/>
            <person name="Mangiamele P."/>
            <person name="Johnson S.J."/>
            <person name="Doetkott C."/>
            <person name="Skyberg J.A."/>
            <person name="Lynne A.M."/>
            <person name="Johnson J.R."/>
            <person name="Nolan L.K."/>
        </authorList>
    </citation>
    <scope>NUCLEOTIDE SEQUENCE [LARGE SCALE GENOMIC DNA]</scope>
</reference>
<feature type="chain" id="PRO_1000034324" description="Mannonate dehydratase">
    <location>
        <begin position="1"/>
        <end position="394"/>
    </location>
</feature>
<proteinExistence type="inferred from homology"/>
<dbReference type="EC" id="4.2.1.8" evidence="1"/>
<dbReference type="EMBL" id="CP000468">
    <property type="protein sequence ID" value="ABJ03828.1"/>
    <property type="molecule type" value="Genomic_DNA"/>
</dbReference>
<dbReference type="RefSeq" id="WP_000438582.1">
    <property type="nucleotide sequence ID" value="NZ_CADILS010000060.1"/>
</dbReference>
<dbReference type="SMR" id="A1AJI8"/>
<dbReference type="GeneID" id="93777517"/>
<dbReference type="KEGG" id="ecv:APECO1_2109"/>
<dbReference type="HOGENOM" id="CLU_058621_2_0_6"/>
<dbReference type="UniPathway" id="UPA00246"/>
<dbReference type="Proteomes" id="UP000008216">
    <property type="component" value="Chromosome"/>
</dbReference>
<dbReference type="GO" id="GO:0008198">
    <property type="term" value="F:ferrous iron binding"/>
    <property type="evidence" value="ECO:0007669"/>
    <property type="project" value="TreeGrafter"/>
</dbReference>
<dbReference type="GO" id="GO:0030145">
    <property type="term" value="F:manganese ion binding"/>
    <property type="evidence" value="ECO:0007669"/>
    <property type="project" value="TreeGrafter"/>
</dbReference>
<dbReference type="GO" id="GO:0008927">
    <property type="term" value="F:mannonate dehydratase activity"/>
    <property type="evidence" value="ECO:0007669"/>
    <property type="project" value="UniProtKB-UniRule"/>
</dbReference>
<dbReference type="GO" id="GO:0042840">
    <property type="term" value="P:D-glucuronate catabolic process"/>
    <property type="evidence" value="ECO:0007669"/>
    <property type="project" value="TreeGrafter"/>
</dbReference>
<dbReference type="FunFam" id="3.20.20.150:FF:000004">
    <property type="entry name" value="Mannonate dehydratase"/>
    <property type="match status" value="1"/>
</dbReference>
<dbReference type="FunFam" id="3.20.20.150:FF:000005">
    <property type="entry name" value="Mannonate dehydratase"/>
    <property type="match status" value="1"/>
</dbReference>
<dbReference type="Gene3D" id="3.20.20.150">
    <property type="entry name" value="Divalent-metal-dependent TIM barrel enzymes"/>
    <property type="match status" value="2"/>
</dbReference>
<dbReference type="HAMAP" id="MF_00106">
    <property type="entry name" value="UxuA"/>
    <property type="match status" value="1"/>
</dbReference>
<dbReference type="InterPro" id="IPR004628">
    <property type="entry name" value="Man_deHydtase"/>
</dbReference>
<dbReference type="InterPro" id="IPR036237">
    <property type="entry name" value="Xyl_isomerase-like_sf"/>
</dbReference>
<dbReference type="NCBIfam" id="NF003027">
    <property type="entry name" value="PRK03906.1"/>
    <property type="match status" value="1"/>
</dbReference>
<dbReference type="NCBIfam" id="TIGR00695">
    <property type="entry name" value="uxuA"/>
    <property type="match status" value="1"/>
</dbReference>
<dbReference type="PANTHER" id="PTHR30387">
    <property type="entry name" value="MANNONATE DEHYDRATASE"/>
    <property type="match status" value="1"/>
</dbReference>
<dbReference type="PANTHER" id="PTHR30387:SF2">
    <property type="entry name" value="MANNONATE DEHYDRATASE"/>
    <property type="match status" value="1"/>
</dbReference>
<dbReference type="Pfam" id="PF03786">
    <property type="entry name" value="UxuA"/>
    <property type="match status" value="1"/>
</dbReference>
<dbReference type="PIRSF" id="PIRSF016049">
    <property type="entry name" value="Man_dehyd"/>
    <property type="match status" value="1"/>
</dbReference>
<dbReference type="SUPFAM" id="SSF51658">
    <property type="entry name" value="Xylose isomerase-like"/>
    <property type="match status" value="1"/>
</dbReference>
<protein>
    <recommendedName>
        <fullName evidence="1">Mannonate dehydratase</fullName>
        <ecNumber evidence="1">4.2.1.8</ecNumber>
    </recommendedName>
    <alternativeName>
        <fullName evidence="1">D-mannonate hydro-lyase</fullName>
    </alternativeName>
</protein>